<comment type="function">
    <text evidence="1">DNA-dependent RNA polymerase catalyzes the transcription of DNA into RNA using the four ribonucleoside triphosphates as substrates.</text>
</comment>
<comment type="catalytic activity">
    <reaction evidence="1">
        <text>RNA(n) + a ribonucleoside 5'-triphosphate = RNA(n+1) + diphosphate</text>
        <dbReference type="Rhea" id="RHEA:21248"/>
        <dbReference type="Rhea" id="RHEA-COMP:14527"/>
        <dbReference type="Rhea" id="RHEA-COMP:17342"/>
        <dbReference type="ChEBI" id="CHEBI:33019"/>
        <dbReference type="ChEBI" id="CHEBI:61557"/>
        <dbReference type="ChEBI" id="CHEBI:140395"/>
        <dbReference type="EC" id="2.7.7.6"/>
    </reaction>
</comment>
<comment type="cofactor">
    <cofactor evidence="1">
        <name>Zn(2+)</name>
        <dbReference type="ChEBI" id="CHEBI:29105"/>
    </cofactor>
    <text evidence="1">Binds 1 Zn(2+) ion per subunit.</text>
</comment>
<comment type="subunit">
    <text evidence="1">In cyanobacteria the RNAP catalytic core is composed of 2 alpha, 1 beta, 1 beta', 1 gamma and 1 omega subunit. When a sigma factor is associated with the core the holoenzyme is formed, which can initiate transcription.</text>
</comment>
<comment type="similarity">
    <text evidence="1">Belongs to the RNA polymerase beta' chain family. RpoC2 subfamily.</text>
</comment>
<accession>A5GVF0</accession>
<dbReference type="EC" id="2.7.7.6" evidence="1"/>
<dbReference type="EMBL" id="CT978603">
    <property type="protein sequence ID" value="CAK28859.1"/>
    <property type="molecule type" value="Genomic_DNA"/>
</dbReference>
<dbReference type="SMR" id="A5GVF0"/>
<dbReference type="STRING" id="316278.SynRCC307_1956"/>
<dbReference type="KEGG" id="syr:SynRCC307_1956"/>
<dbReference type="eggNOG" id="COG0086">
    <property type="taxonomic scope" value="Bacteria"/>
</dbReference>
<dbReference type="HOGENOM" id="CLU_000524_1_0_3"/>
<dbReference type="OrthoDB" id="9815296at2"/>
<dbReference type="Proteomes" id="UP000001115">
    <property type="component" value="Chromosome"/>
</dbReference>
<dbReference type="GO" id="GO:0000428">
    <property type="term" value="C:DNA-directed RNA polymerase complex"/>
    <property type="evidence" value="ECO:0007669"/>
    <property type="project" value="UniProtKB-KW"/>
</dbReference>
<dbReference type="GO" id="GO:0003677">
    <property type="term" value="F:DNA binding"/>
    <property type="evidence" value="ECO:0007669"/>
    <property type="project" value="UniProtKB-UniRule"/>
</dbReference>
<dbReference type="GO" id="GO:0003899">
    <property type="term" value="F:DNA-directed RNA polymerase activity"/>
    <property type="evidence" value="ECO:0007669"/>
    <property type="project" value="UniProtKB-UniRule"/>
</dbReference>
<dbReference type="GO" id="GO:0008270">
    <property type="term" value="F:zinc ion binding"/>
    <property type="evidence" value="ECO:0007669"/>
    <property type="project" value="UniProtKB-UniRule"/>
</dbReference>
<dbReference type="GO" id="GO:0006351">
    <property type="term" value="P:DNA-templated transcription"/>
    <property type="evidence" value="ECO:0007669"/>
    <property type="project" value="UniProtKB-UniRule"/>
</dbReference>
<dbReference type="CDD" id="cd02655">
    <property type="entry name" value="RNAP_beta'_C"/>
    <property type="match status" value="1"/>
</dbReference>
<dbReference type="FunFam" id="1.10.150.390:FF:000002">
    <property type="entry name" value="DNA-directed RNA polymerase subunit beta"/>
    <property type="match status" value="1"/>
</dbReference>
<dbReference type="Gene3D" id="1.10.132.30">
    <property type="match status" value="1"/>
</dbReference>
<dbReference type="Gene3D" id="1.10.150.390">
    <property type="match status" value="1"/>
</dbReference>
<dbReference type="Gene3D" id="1.10.1790.20">
    <property type="match status" value="1"/>
</dbReference>
<dbReference type="Gene3D" id="2.40.50.100">
    <property type="match status" value="1"/>
</dbReference>
<dbReference type="Gene3D" id="1.10.274.100">
    <property type="entry name" value="RNA polymerase Rpb1, domain 3"/>
    <property type="match status" value="1"/>
</dbReference>
<dbReference type="HAMAP" id="MF_01324">
    <property type="entry name" value="RNApol_bact_RpoC2"/>
    <property type="match status" value="1"/>
</dbReference>
<dbReference type="InterPro" id="IPR012756">
    <property type="entry name" value="DNA-dir_RpoC2_beta_pp"/>
</dbReference>
<dbReference type="InterPro" id="IPR045867">
    <property type="entry name" value="DNA-dir_RpoC_beta_prime"/>
</dbReference>
<dbReference type="InterPro" id="IPR007066">
    <property type="entry name" value="RNA_pol_Rpb1_3"/>
</dbReference>
<dbReference type="InterPro" id="IPR042102">
    <property type="entry name" value="RNA_pol_Rpb1_3_sf"/>
</dbReference>
<dbReference type="InterPro" id="IPR007083">
    <property type="entry name" value="RNA_pol_Rpb1_4"/>
</dbReference>
<dbReference type="InterPro" id="IPR007081">
    <property type="entry name" value="RNA_pol_Rpb1_5"/>
</dbReference>
<dbReference type="InterPro" id="IPR038120">
    <property type="entry name" value="Rpb1_funnel_sf"/>
</dbReference>
<dbReference type="NCBIfam" id="NF002724">
    <property type="entry name" value="PRK02597.1"/>
    <property type="match status" value="1"/>
</dbReference>
<dbReference type="NCBIfam" id="TIGR02388">
    <property type="entry name" value="rpoC2_cyan"/>
    <property type="match status" value="1"/>
</dbReference>
<dbReference type="PANTHER" id="PTHR19376">
    <property type="entry name" value="DNA-DIRECTED RNA POLYMERASE"/>
    <property type="match status" value="1"/>
</dbReference>
<dbReference type="PANTHER" id="PTHR19376:SF54">
    <property type="entry name" value="DNA-DIRECTED RNA POLYMERASE SUBUNIT BETA"/>
    <property type="match status" value="1"/>
</dbReference>
<dbReference type="Pfam" id="PF04983">
    <property type="entry name" value="RNA_pol_Rpb1_3"/>
    <property type="match status" value="1"/>
</dbReference>
<dbReference type="Pfam" id="PF05000">
    <property type="entry name" value="RNA_pol_Rpb1_4"/>
    <property type="match status" value="1"/>
</dbReference>
<dbReference type="Pfam" id="PF04998">
    <property type="entry name" value="RNA_pol_Rpb1_5"/>
    <property type="match status" value="1"/>
</dbReference>
<dbReference type="SUPFAM" id="SSF64484">
    <property type="entry name" value="beta and beta-prime subunits of DNA dependent RNA-polymerase"/>
    <property type="match status" value="1"/>
</dbReference>
<organism>
    <name type="scientific">Synechococcus sp. (strain RCC307)</name>
    <dbReference type="NCBI Taxonomy" id="316278"/>
    <lineage>
        <taxon>Bacteria</taxon>
        <taxon>Bacillati</taxon>
        <taxon>Cyanobacteriota</taxon>
        <taxon>Cyanophyceae</taxon>
        <taxon>Synechococcales</taxon>
        <taxon>Synechococcaceae</taxon>
        <taxon>Synechococcus</taxon>
    </lineage>
</organism>
<proteinExistence type="inferred from homology"/>
<evidence type="ECO:0000255" key="1">
    <source>
        <dbReference type="HAMAP-Rule" id="MF_01324"/>
    </source>
</evidence>
<evidence type="ECO:0000256" key="2">
    <source>
        <dbReference type="SAM" id="MobiDB-lite"/>
    </source>
</evidence>
<reference key="1">
    <citation type="submission" date="2006-05" db="EMBL/GenBank/DDBJ databases">
        <authorList>
            <consortium name="Genoscope"/>
        </authorList>
    </citation>
    <scope>NUCLEOTIDE SEQUENCE [LARGE SCALE GENOMIC DNA]</scope>
    <source>
        <strain>RCC307</strain>
    </source>
</reference>
<feature type="chain" id="PRO_0000353539" description="DNA-directed RNA polymerase subunit beta'">
    <location>
        <begin position="1"/>
        <end position="1368"/>
    </location>
</feature>
<feature type="region of interest" description="Disordered" evidence="2">
    <location>
        <begin position="1"/>
        <end position="38"/>
    </location>
</feature>
<feature type="region of interest" description="Disordered" evidence="2">
    <location>
        <begin position="1340"/>
        <end position="1368"/>
    </location>
</feature>
<feature type="compositionally biased region" description="Basic residues" evidence="2">
    <location>
        <begin position="7"/>
        <end position="18"/>
    </location>
</feature>
<feature type="compositionally biased region" description="Low complexity" evidence="2">
    <location>
        <begin position="19"/>
        <end position="29"/>
    </location>
</feature>
<feature type="compositionally biased region" description="Low complexity" evidence="2">
    <location>
        <begin position="1353"/>
        <end position="1368"/>
    </location>
</feature>
<feature type="binding site" evidence="1">
    <location>
        <position position="250"/>
    </location>
    <ligand>
        <name>Zn(2+)</name>
        <dbReference type="ChEBI" id="CHEBI:29105"/>
    </ligand>
</feature>
<feature type="binding site" evidence="1">
    <location>
        <position position="318"/>
    </location>
    <ligand>
        <name>Zn(2+)</name>
        <dbReference type="ChEBI" id="CHEBI:29105"/>
    </ligand>
</feature>
<feature type="binding site" evidence="1">
    <location>
        <position position="325"/>
    </location>
    <ligand>
        <name>Zn(2+)</name>
        <dbReference type="ChEBI" id="CHEBI:29105"/>
    </ligand>
</feature>
<feature type="binding site" evidence="1">
    <location>
        <position position="328"/>
    </location>
    <ligand>
        <name>Zn(2+)</name>
        <dbReference type="ChEBI" id="CHEBI:29105"/>
    </ligand>
</feature>
<keyword id="KW-0240">DNA-directed RNA polymerase</keyword>
<keyword id="KW-0479">Metal-binding</keyword>
<keyword id="KW-0548">Nucleotidyltransferase</keyword>
<keyword id="KW-1185">Reference proteome</keyword>
<keyword id="KW-0804">Transcription</keyword>
<keyword id="KW-0808">Transferase</keyword>
<keyword id="KW-0862">Zinc</keyword>
<gene>
    <name evidence="1" type="primary">rpoC2</name>
    <name type="ordered locus">SynRCC307_1956</name>
</gene>
<protein>
    <recommendedName>
        <fullName evidence="1">DNA-directed RNA polymerase subunit beta'</fullName>
        <shortName evidence="1">RNAP subunit beta'</shortName>
        <ecNumber evidence="1">2.7.7.6</ecNumber>
    </recommendedName>
    <alternativeName>
        <fullName evidence="1">RNA polymerase subunit beta'</fullName>
    </alternativeName>
    <alternativeName>
        <fullName evidence="1">Transcriptase subunit beta'</fullName>
    </alternativeName>
</protein>
<name>RPOC2_SYNR3</name>
<sequence>MTSSSKPARKTSKSKSKASKAAEAPAAPSNELSREAPTFQNKVIDKKALRSLVAWSYKHHGTAATSALADDLKDLGFRFATQAAVSISVDDLRVPGDKSTLLQEAEDQITATEERYRLGEITEVERHTKVIDTWTETNERLVQSVRRNFDENDPLNSVWMMANSGARGNMSQVRQLVGMRGLMANPQGEIIDLPIRTNFREGLTVTEYVISSYGARKGLVDTALRTADSGYLTRRLVDVAQDVIVREDDCGTTRSIKVAADDNGKYKSRLVGRLLAEDVVDGAGEVIATRNTEVDPPLSARIEAAGIAQVQVRSPLTCEAARSVCRKCYGWALAHNELVDLGEAVGIIAAQSIGEPGTQLTMRTFHTGGVSTAETGVVRSVVEGSVEFSAKAKVRPHRTPHGVEAQLAETDFSLTVKPSGKGKTQKLDVTAGSILFVNAGGSVPNDTILAQISSGSAVKKSVEKATKDVVCDLAGQVRYEDVIQPKEVPDRQGNITLKAQRLGRLWVFSGDVYNLPPNAMPVVQGGANVKTGEVLAESRQVSEFGGAVRLRESQGDSREVEIVTSSLTLKDCKLVATTTHSGQIWHLESKDNTRYRLNTEPGTKIANGEVIAELADDRFRTQTGGLVKFAPGLAIKKARSAKNGFEVSKGGTLLWIPQETHEINKDISLLMIEDGQWIEAGTEVVKDIFSQTAGIVTVTQKNDILREIIVRSGQLHLVSDSKVLARYTDGGGKMVNPGEEIAPGLKAEAMHMVEAVDTPEGGALLLRPVEEYAIPNEAHMPELGSVKQANGPSMGLKAVQRLAFKDGELVKSVEGVELLRTQLLLETFDTTPQMTVDVESAQDKRAKTIQRLQLTILETHLVRRDTLSDASHGSTHTEVKVADGDNIKRGDVVATVQILCKDDGVAQLPDRKDDEPIRRLIVERPSDTITVDLGGSKLSLKAGQRVVEGDDLGGGLTCPHSGQVEEVKGSSLTLRVGRPYMVSPDSILHVRDGDLVLRGDTLAQLVFERAKTGDIVQGLPRIEELLEARRPRESAVLCRKAGTIKVEQPEGEDNPTVSVNEGEELHTEYPILLGRTVMVSDGQEVKAGDLLTDGPINPHELLEVIFEDLRGPLPTMDAANQAIGRLQTALVQEVQNVYKSQGVTIDDKHLEVIVRQMTSKVRIEDAGDTTLLPGELIELRQVDQVNQAMAITGGAPAEFTPVLLGITKASLNTDSFISAASFQETTRVLTEAAIEGKSDWLRGLKENVIIGRLIPAGTGFSGFDEQLKAEALPHPDILGEENAGYRRATNLRPDYTVEMPLPQSNTAVLDDPSDTELEATRSRHGIEDRTNLAAFARPAAGEELAEEHVPDPGALEGLQEEGLLSQDS</sequence>